<comment type="function">
    <text evidence="5">Involved in anthocyanin biosynthesis by catalyzing the oxidation of leucoanthocyanidins into anthocyanidins (PubMed:30912865). Required for the accumulation of anthocyanin in red-fleshed kiwifruit varieties (PubMed:30912865).</text>
</comment>
<comment type="catalytic activity">
    <reaction evidence="5">
        <text>a (2R,3S,4S)-leucoanthocyanidin + 2-oxoglutarate + O2 = a 4-H-anthocyanidin with a 3-hydroxy group + succinate + CO2 + 2 H2O</text>
        <dbReference type="Rhea" id="RHEA:54432"/>
        <dbReference type="ChEBI" id="CHEBI:15377"/>
        <dbReference type="ChEBI" id="CHEBI:15379"/>
        <dbReference type="ChEBI" id="CHEBI:16526"/>
        <dbReference type="ChEBI" id="CHEBI:16810"/>
        <dbReference type="ChEBI" id="CHEBI:30031"/>
        <dbReference type="ChEBI" id="CHEBI:138176"/>
        <dbReference type="ChEBI" id="CHEBI:138177"/>
        <dbReference type="EC" id="1.14.20.4"/>
    </reaction>
    <physiologicalReaction direction="left-to-right" evidence="5">
        <dbReference type="Rhea" id="RHEA:54433"/>
    </physiologicalReaction>
</comment>
<comment type="cofactor">
    <cofactor evidence="1">
        <name>L-ascorbate</name>
        <dbReference type="ChEBI" id="CHEBI:38290"/>
    </cofactor>
    <text evidence="1">Binds 1 ascorbate molecule per subunit.</text>
</comment>
<comment type="cofactor">
    <cofactor evidence="2">
        <name>Fe(2+)</name>
        <dbReference type="ChEBI" id="CHEBI:29033"/>
    </cofactor>
    <text evidence="2">Binds 1 Fe(2+) ion per subunit.</text>
</comment>
<comment type="pathway">
    <text evidence="9">Pigment biosynthesis; anthocyanin biosynthesis.</text>
</comment>
<comment type="tissue specificity">
    <text evidence="3 4">Expressed in stems and leaves (PubMed:25143057). Expressed at low levels in ovaries (PubMed:21175894, PubMed:25143057).</text>
</comment>
<comment type="developmental stage">
    <text evidence="3">Expressed in the inner and outer pericarps of developing fruit from 20 to 49 days after flowering (DAF), and expression decreases as the fruit ripens.</text>
</comment>
<comment type="similarity">
    <text evidence="9">Belongs to the iron/ascorbate-dependent oxidoreductase family.</text>
</comment>
<reference key="1">
    <citation type="journal article" date="2015" name="Physiol. Plantarum">
        <title>High-temperature inhibition of biosynthesis and transportation of anthocyanins results in the poor red coloration in red-fleshed Actinidia chinensis.</title>
        <authorList>
            <person name="Man Y.P."/>
            <person name="Wang Y.C."/>
            <person name="Li Z.Z."/>
            <person name="Jiang Z.W."/>
            <person name="Yang H.L."/>
            <person name="Gong J.J."/>
            <person name="He S.S."/>
            <person name="Wu S.Q."/>
            <person name="Yang Z.Q."/>
            <person name="Zheng J."/>
            <person name="Wang Z.Y."/>
        </authorList>
    </citation>
    <scope>NUCLEOTIDE SEQUENCE [MRNA]</scope>
    <scope>TISSUE SPECIFICITY</scope>
</reference>
<reference key="2">
    <citation type="journal article" date="2018" name="BMC Genomics">
        <title>A manually annotated Actinidia chinensis var. chinensis (kiwifruit) genome highlights the challenges associated with draft genomes and gene prediction in plants.</title>
        <authorList>
            <person name="Pilkington S.M."/>
            <person name="Crowhurst R."/>
            <person name="Hilario E."/>
            <person name="Nardozza S."/>
            <person name="Fraser L."/>
            <person name="Peng Y."/>
            <person name="Gunaseelan K."/>
            <person name="Simpson R."/>
            <person name="Tahir J."/>
            <person name="Deroles S.C."/>
            <person name="Templeton K."/>
            <person name="Luo Z."/>
            <person name="Davy M."/>
            <person name="Cheng C."/>
            <person name="McNeilage M."/>
            <person name="Scaglione D."/>
            <person name="Liu Y."/>
            <person name="Zhang Q."/>
            <person name="Datson P."/>
            <person name="De Silva N."/>
            <person name="Gardiner S.E."/>
            <person name="Bassett H."/>
            <person name="Chagne D."/>
            <person name="McCallum J."/>
            <person name="Dzierzon H."/>
            <person name="Deng C."/>
            <person name="Wang Y.Y."/>
            <person name="Barron L."/>
            <person name="Manako K."/>
            <person name="Bowen J."/>
            <person name="Foster T.M."/>
            <person name="Erridge Z.A."/>
            <person name="Tiffin H."/>
            <person name="Waite C.N."/>
            <person name="Davies K.M."/>
            <person name="Grierson E.P."/>
            <person name="Laing W.A."/>
            <person name="Kirk R."/>
            <person name="Chen X."/>
            <person name="Wood M."/>
            <person name="Montefiori M."/>
            <person name="Brummell D.A."/>
            <person name="Schwinn K.E."/>
            <person name="Catanach A."/>
            <person name="Fullerton C."/>
            <person name="Li D."/>
            <person name="Meiyalaghan S."/>
            <person name="Nieuwenhuizen N."/>
            <person name="Read N."/>
            <person name="Prakash R."/>
            <person name="Hunter D."/>
            <person name="Zhang H."/>
            <person name="McKenzie M."/>
            <person name="Knabel M."/>
            <person name="Harris A."/>
            <person name="Allan A.C."/>
            <person name="Gleave A."/>
            <person name="Chen A."/>
            <person name="Janssen B.J."/>
            <person name="Plunkett B."/>
            <person name="Ampomah-Dwamena C."/>
            <person name="Voogd C."/>
            <person name="Leif D."/>
            <person name="Lafferty D."/>
            <person name="Souleyre E.J.F."/>
            <person name="Varkonyi-Gasic E."/>
            <person name="Gambi F."/>
            <person name="Hanley J."/>
            <person name="Yao J.L."/>
            <person name="Cheung J."/>
            <person name="David K.M."/>
            <person name="Warren B."/>
            <person name="Marsh K."/>
            <person name="Snowden K.C."/>
            <person name="Lin-Wang K."/>
            <person name="Brian L."/>
            <person name="Martinez-Sanchez M."/>
            <person name="Wang M."/>
            <person name="Ileperuma N."/>
            <person name="Macnee N."/>
            <person name="Campin R."/>
            <person name="McAtee P."/>
            <person name="Drummond R.S.M."/>
            <person name="Espley R.V."/>
            <person name="Ireland H.S."/>
            <person name="Wu R."/>
            <person name="Atkinson R.G."/>
            <person name="Karunairetnam S."/>
            <person name="Bulley S."/>
            <person name="Chunkath S."/>
            <person name="Hanley Z."/>
            <person name="Storey R."/>
            <person name="Thrimawithana A.H."/>
            <person name="Thomson S."/>
            <person name="David C."/>
            <person name="Testolin R."/>
            <person name="Huang H."/>
            <person name="Hellens R.P."/>
            <person name="Schaffer R.J."/>
        </authorList>
    </citation>
    <scope>NUCLEOTIDE SEQUENCE [LARGE SCALE GENOMIC DNA]</scope>
    <source>
        <strain>cv. Red5</strain>
    </source>
</reference>
<reference key="3">
    <citation type="journal article" date="2011" name="Plant J.">
        <title>Identification and characterisation of F3GT1 and F3GGT1, two glycosyltransferases responsible for anthocyanin biosynthesis in red-fleshed kiwifruit (Actinidia chinensis).</title>
        <authorList>
            <person name="Montefiori M."/>
            <person name="Espley R.V."/>
            <person name="Stevenson D."/>
            <person name="Cooney J."/>
            <person name="Datson P.M."/>
            <person name="Saiz A."/>
            <person name="Atkinson R.G."/>
            <person name="Hellens R.P."/>
            <person name="Allan A.C."/>
        </authorList>
    </citation>
    <scope>TISSUE SPECIFICITY</scope>
    <scope>DEVELOPMENTAL STAGE</scope>
</reference>
<reference key="4">
    <citation type="journal article" date="2019" name="Plant J.">
        <title>A MYB/bHLH complex regulates tissue-specific anthocyanin biosynthesis in the inner pericarp of red-centered kiwifruit Actinidia chinensis cv. Hongyang.</title>
        <authorList>
            <person name="Wang L."/>
            <person name="Tang W."/>
            <person name="Hu Y."/>
            <person name="Zhang Y."/>
            <person name="Sun J."/>
            <person name="Guo X."/>
            <person name="Lu H."/>
            <person name="Yang Y."/>
            <person name="Fang C."/>
            <person name="Niu X."/>
            <person name="Yue J."/>
            <person name="Fei Z."/>
            <person name="Liu Y."/>
        </authorList>
    </citation>
    <scope>FUNCTION</scope>
    <scope>CATALYTIC ACTIVITY</scope>
</reference>
<keyword id="KW-0223">Dioxygenase</keyword>
<keyword id="KW-0284">Flavonoid biosynthesis</keyword>
<keyword id="KW-0408">Iron</keyword>
<keyword id="KW-0479">Metal-binding</keyword>
<keyword id="KW-0560">Oxidoreductase</keyword>
<keyword id="KW-1185">Reference proteome</keyword>
<keyword id="KW-0847">Vitamin C</keyword>
<feature type="chain" id="PRO_0000448077" description="Anthocyanin synthase">
    <location>
        <begin position="1"/>
        <end position="355"/>
    </location>
</feature>
<feature type="domain" description="Fe2OG dioxygenase" evidence="2">
    <location>
        <begin position="211"/>
        <end position="310"/>
    </location>
</feature>
<feature type="binding site" evidence="1">
    <location>
        <position position="145"/>
    </location>
    <ligand>
        <name>substrate</name>
    </ligand>
</feature>
<feature type="binding site" evidence="1">
    <location>
        <position position="216"/>
    </location>
    <ligand>
        <name>substrate</name>
    </ligand>
</feature>
<feature type="binding site" evidence="1">
    <location>
        <begin position="218"/>
        <end position="220"/>
    </location>
    <ligand>
        <name>2-oxoglutarate</name>
        <dbReference type="ChEBI" id="CHEBI:16810"/>
    </ligand>
</feature>
<feature type="binding site" evidence="2">
    <location>
        <position position="235"/>
    </location>
    <ligand>
        <name>Fe cation</name>
        <dbReference type="ChEBI" id="CHEBI:24875"/>
    </ligand>
</feature>
<feature type="binding site" evidence="1">
    <location>
        <position position="236"/>
    </location>
    <ligand>
        <name>substrate</name>
    </ligand>
</feature>
<feature type="binding site" evidence="2">
    <location>
        <position position="237"/>
    </location>
    <ligand>
        <name>Fe cation</name>
        <dbReference type="ChEBI" id="CHEBI:24875"/>
    </ligand>
</feature>
<feature type="binding site" evidence="2">
    <location>
        <position position="291"/>
    </location>
    <ligand>
        <name>Fe cation</name>
        <dbReference type="ChEBI" id="CHEBI:24875"/>
    </ligand>
</feature>
<feature type="binding site" evidence="1">
    <location>
        <begin position="301"/>
        <end position="303"/>
    </location>
    <ligand>
        <name>2-oxoglutarate</name>
        <dbReference type="ChEBI" id="CHEBI:16810"/>
    </ligand>
</feature>
<feature type="binding site" evidence="2">
    <location>
        <position position="301"/>
    </location>
    <ligand>
        <name>2-oxoglutarate</name>
        <dbReference type="ChEBI" id="CHEBI:16810"/>
    </ligand>
</feature>
<feature type="binding site" evidence="1">
    <location>
        <position position="309"/>
    </location>
    <ligand>
        <name>substrate</name>
    </ligand>
</feature>
<feature type="binding site" evidence="1">
    <location>
        <position position="344"/>
    </location>
    <ligand>
        <name>substrate</name>
    </ligand>
</feature>
<feature type="sequence conflict" description="In Ref. 1; AGV53047." evidence="9" ref="1">
    <original>E</original>
    <variation>G</variation>
    <location>
        <position position="42"/>
    </location>
</feature>
<feature type="sequence conflict" description="In Ref. 1; AGV53047." evidence="9" ref="1">
    <original>S</original>
    <variation>P</variation>
    <location>
        <position position="60"/>
    </location>
</feature>
<feature type="sequence conflict" description="In Ref. 1; AGV53047." evidence="9" ref="1">
    <original>L</original>
    <variation>P</variation>
    <location>
        <position position="201"/>
    </location>
</feature>
<name>LDOX_ACTCC</name>
<accession>A0A2R6PI27</accession>
<accession>T2DJM4</accession>
<protein>
    <recommendedName>
        <fullName evidence="8">Anthocyanin synthase</fullName>
        <shortName evidence="8">AcANS</shortName>
        <ecNumber evidence="5">1.14.20.4</ecNumber>
    </recommendedName>
    <alternativeName>
        <fullName evidence="7">Leucoanthocyanidin dioxygenase</fullName>
        <shortName evidence="7">AcLDOX</shortName>
        <shortName evidence="9">Leucocyanidin oxygenase</shortName>
    </alternativeName>
</protein>
<evidence type="ECO:0000250" key="1">
    <source>
        <dbReference type="UniProtKB" id="Q96323"/>
    </source>
</evidence>
<evidence type="ECO:0000255" key="2">
    <source>
        <dbReference type="PROSITE-ProRule" id="PRU00805"/>
    </source>
</evidence>
<evidence type="ECO:0000269" key="3">
    <source>
    </source>
</evidence>
<evidence type="ECO:0000269" key="4">
    <source>
    </source>
</evidence>
<evidence type="ECO:0000269" key="5">
    <source>
    </source>
</evidence>
<evidence type="ECO:0000303" key="6">
    <source>
    </source>
</evidence>
<evidence type="ECO:0000303" key="7">
    <source>
    </source>
</evidence>
<evidence type="ECO:0000303" key="8">
    <source>
    </source>
</evidence>
<evidence type="ECO:0000305" key="9"/>
<evidence type="ECO:0000312" key="10">
    <source>
        <dbReference type="EMBL" id="PSR91531.1"/>
    </source>
</evidence>
<dbReference type="EC" id="1.14.20.4" evidence="5"/>
<dbReference type="EMBL" id="KF157392">
    <property type="protein sequence ID" value="AGV53047.1"/>
    <property type="molecule type" value="mRNA"/>
</dbReference>
<dbReference type="EMBL" id="NKQK01000025">
    <property type="protein sequence ID" value="PSR91531.1"/>
    <property type="molecule type" value="Genomic_DNA"/>
</dbReference>
<dbReference type="SMR" id="A0A2R6PI27"/>
<dbReference type="FunCoup" id="A0A2R6PI27">
    <property type="interactions" value="127"/>
</dbReference>
<dbReference type="STRING" id="1590841.A0A2R6PI27"/>
<dbReference type="EnsemblPlants" id="PSR91531">
    <property type="protein sequence ID" value="PSR91531"/>
    <property type="gene ID" value="CEY00_Acc28876"/>
</dbReference>
<dbReference type="Gramene" id="PSR91531">
    <property type="protein sequence ID" value="PSR91531"/>
    <property type="gene ID" value="CEY00_Acc28876"/>
</dbReference>
<dbReference type="InParanoid" id="A0A2R6PI27"/>
<dbReference type="OMA" id="SWVVFAQ"/>
<dbReference type="OrthoDB" id="288590at2759"/>
<dbReference type="UniPathway" id="UPA00009"/>
<dbReference type="Proteomes" id="UP000241394">
    <property type="component" value="Chromosome LG25"/>
</dbReference>
<dbReference type="GO" id="GO:0031418">
    <property type="term" value="F:L-ascorbic acid binding"/>
    <property type="evidence" value="ECO:0007669"/>
    <property type="project" value="UniProtKB-KW"/>
</dbReference>
<dbReference type="GO" id="GO:0050589">
    <property type="term" value="F:leucocyanidin oxygenase activity"/>
    <property type="evidence" value="ECO:0007669"/>
    <property type="project" value="UniProtKB-EC"/>
</dbReference>
<dbReference type="GO" id="GO:0046872">
    <property type="term" value="F:metal ion binding"/>
    <property type="evidence" value="ECO:0007669"/>
    <property type="project" value="UniProtKB-KW"/>
</dbReference>
<dbReference type="GO" id="GO:0050498">
    <property type="term" value="F:oxidoreductase activity, acting on paired donors, with incorporation or reduction of molecular oxygen, with 2-oxoglutarate as one donor, and the other dehydrogenated"/>
    <property type="evidence" value="ECO:0000314"/>
    <property type="project" value="UniProtKB"/>
</dbReference>
<dbReference type="GO" id="GO:0009718">
    <property type="term" value="P:anthocyanin-containing compound biosynthetic process"/>
    <property type="evidence" value="ECO:0000314"/>
    <property type="project" value="UniProtKB"/>
</dbReference>
<dbReference type="FunFam" id="2.60.120.330:FF:000009">
    <property type="entry name" value="Flavonol synthase"/>
    <property type="match status" value="1"/>
</dbReference>
<dbReference type="Gene3D" id="2.60.120.330">
    <property type="entry name" value="B-lactam Antibiotic, Isopenicillin N Synthase, Chain"/>
    <property type="match status" value="1"/>
</dbReference>
<dbReference type="InterPro" id="IPR026992">
    <property type="entry name" value="DIOX_N"/>
</dbReference>
<dbReference type="InterPro" id="IPR044861">
    <property type="entry name" value="IPNS-like_FE2OG_OXY"/>
</dbReference>
<dbReference type="InterPro" id="IPR027443">
    <property type="entry name" value="IPNS-like_sf"/>
</dbReference>
<dbReference type="InterPro" id="IPR005123">
    <property type="entry name" value="Oxoglu/Fe-dep_dioxygenase_dom"/>
</dbReference>
<dbReference type="InterPro" id="IPR050295">
    <property type="entry name" value="Plant_2OG-oxidoreductases"/>
</dbReference>
<dbReference type="PANTHER" id="PTHR47991">
    <property type="entry name" value="OXOGLUTARATE/IRON-DEPENDENT DIOXYGENASE"/>
    <property type="match status" value="1"/>
</dbReference>
<dbReference type="Pfam" id="PF03171">
    <property type="entry name" value="2OG-FeII_Oxy"/>
    <property type="match status" value="1"/>
</dbReference>
<dbReference type="Pfam" id="PF14226">
    <property type="entry name" value="DIOX_N"/>
    <property type="match status" value="1"/>
</dbReference>
<dbReference type="SUPFAM" id="SSF51197">
    <property type="entry name" value="Clavaminate synthase-like"/>
    <property type="match status" value="1"/>
</dbReference>
<dbReference type="PROSITE" id="PS51471">
    <property type="entry name" value="FE2OG_OXY"/>
    <property type="match status" value="1"/>
</dbReference>
<organism>
    <name type="scientific">Actinidia chinensis var. chinensis</name>
    <name type="common">Chinese soft-hair kiwi</name>
    <dbReference type="NCBI Taxonomy" id="1590841"/>
    <lineage>
        <taxon>Eukaryota</taxon>
        <taxon>Viridiplantae</taxon>
        <taxon>Streptophyta</taxon>
        <taxon>Embryophyta</taxon>
        <taxon>Tracheophyta</taxon>
        <taxon>Spermatophyta</taxon>
        <taxon>Magnoliopsida</taxon>
        <taxon>eudicotyledons</taxon>
        <taxon>Gunneridae</taxon>
        <taxon>Pentapetalae</taxon>
        <taxon>asterids</taxon>
        <taxon>Ericales</taxon>
        <taxon>Actinidiaceae</taxon>
        <taxon>Actinidia</taxon>
    </lineage>
</organism>
<sequence length="355" mass="39959">MVATVVGTRVESLASSGIEAIPKEYVRPQEELTSIGNIFEEEKKENGPQVPTIDLEDLVSEDEEKRVRCHEELKRAATEWGVMQVVNHGIPIELMERVRAAGAEFFNQSVEEKEKYANDHASGNIQGYGSKLANNASGQLEWEDYFFHLVYPEDKRDMSIWPKTPSDYIPATSAYAEHLRGLATKILSALSLGLGLEEGRLEKEVGGMEELLLQMKINYYPKCPQPELALGVEAHTDVSALTFILHNMVPGLQLFYEGKWVTAKCVPDSLVMHIGDTIEILSNGKYKSILHRGLVNKEKVRISWAVFCEPPKEKIILKPLPETVSEAEPPLYPPRTFAQHIHHKLFRKTQELGAK</sequence>
<gene>
    <name evidence="7" type="primary">LDOX</name>
    <name evidence="8" type="synonym">ANS</name>
    <name evidence="6" type="synonym">ANS1</name>
    <name evidence="6" type="synonym">ANS4</name>
    <name evidence="10" type="ORF">CEY00_Acc28876</name>
</gene>
<proteinExistence type="evidence at protein level"/>